<protein>
    <recommendedName>
        <fullName evidence="15">Suppressor of cytokine signaling 3</fullName>
        <shortName>SOCS-3</shortName>
    </recommendedName>
    <alternativeName>
        <fullName>Cytokine-inducible SH2 protein 3</fullName>
        <shortName>CIS-3</shortName>
    </alternativeName>
    <alternativeName>
        <fullName>STAT-induced STAT inhibitor 3</fullName>
        <shortName>SSI-3</shortName>
    </alternativeName>
</protein>
<feature type="chain" id="PRO_0000181243" description="Suppressor of cytokine signaling 3">
    <location>
        <begin position="1"/>
        <end position="225"/>
    </location>
</feature>
<feature type="domain" description="SH2" evidence="3">
    <location>
        <begin position="46"/>
        <end position="142"/>
    </location>
</feature>
<feature type="domain" description="SOCS box" evidence="4">
    <location>
        <begin position="177"/>
        <end position="224"/>
    </location>
</feature>
<feature type="region of interest" description="Kinase inhibitory region (KIR)">
    <location>
        <begin position="22"/>
        <end position="33"/>
    </location>
</feature>
<feature type="region of interest" description="Extended SH2 subdomain (ESS)">
    <location>
        <begin position="34"/>
        <end position="45"/>
    </location>
</feature>
<feature type="region of interest" description="Disordered" evidence="5">
    <location>
        <begin position="131"/>
        <end position="162"/>
    </location>
</feature>
<feature type="compositionally biased region" description="Pro residues" evidence="5">
    <location>
        <begin position="131"/>
        <end position="142"/>
    </location>
</feature>
<feature type="compositionally biased region" description="Low complexity" evidence="5">
    <location>
        <begin position="143"/>
        <end position="155"/>
    </location>
</feature>
<feature type="sequence variant" id="VAR_030033" description="In dbSNP:rs1061489." evidence="14">
    <original>H</original>
    <variation>Y</variation>
    <location>
        <position position="125"/>
    </location>
</feature>
<feature type="mutagenesis site" description="Little effect on EPO-induced STAT5 signaling suppression." evidence="6">
    <original>L</original>
    <variation>A</variation>
    <variation>F</variation>
    <location>
        <position position="22"/>
    </location>
</feature>
<feature type="mutagenesis site" description="Complete loss of EPO-induced STAT5 signaling suppression. No suppression of JAK2 phosphorylation." evidence="6">
    <original>L</original>
    <variation>D</variation>
    <location>
        <position position="22"/>
    </location>
</feature>
<feature type="mutagenesis site" description="Complete loss of EPO-induced STAT5 signaling suppression. Abolishes binding to JH1." evidence="6">
    <original>F</original>
    <variation>A</variation>
    <location>
        <position position="25"/>
    </location>
</feature>
<feature type="mutagenesis site" description="Partial loss of EPO-induced STAT5 signaling suppression. No effect on LIF-induced signaling suppression. Abolishes binding to JH1. Inhibits JAK2 phosphorylation." evidence="6">
    <original>E</original>
    <variation>R</variation>
    <location>
        <position position="30"/>
    </location>
</feature>
<feature type="mutagenesis site" description="Complete loss of EPO-induced STAT5 signaling suppression. No effect on LIF-induced STAT3 signaling. Abolishes binding to JH1." evidence="6">
    <original>Y</original>
    <variation>A</variation>
    <location>
        <position position="31"/>
    </location>
</feature>
<feature type="mutagenesis site" description="Little effect on EPO-induced signaling suppression." evidence="6">
    <original>Y</original>
    <variation>F</variation>
    <location>
        <position position="31"/>
    </location>
</feature>
<feature type="mutagenesis site" description="Complete loss of EPO/LIF-induced signaling suppression." evidence="6">
    <original>V</original>
    <variation>E</variation>
    <location>
        <position position="34"/>
    </location>
</feature>
<feature type="mutagenesis site" description="Complete loss of EPO/LIF-induced signaling inhibition. Abolishes binding to JH1." evidence="6">
    <original>L</original>
    <variation>R</variation>
    <location>
        <position position="41"/>
    </location>
</feature>
<feature type="mutagenesis site" description="Little effect on EPO/LIF signaling." evidence="6">
    <original>G</original>
    <variation>A</variation>
    <location>
        <position position="45"/>
    </location>
</feature>
<feature type="mutagenesis site" description="No effect on binding to Y429/Y431 phosphorylated EPOR." evidence="7">
    <original>G</original>
    <variation>V</variation>
    <location>
        <position position="53"/>
    </location>
</feature>
<feature type="mutagenesis site" description="Impaired binding to Y429/Y431 phosphorylated EPOR." evidence="7">
    <original>L</original>
    <variation>A</variation>
    <location>
        <position position="58"/>
    </location>
</feature>
<feature type="mutagenesis site" description="Complete loss of EPO/LIF-induced signaling suppression. No inhibition of JAK2 phosphorylation." evidence="6 8">
    <original>R</original>
    <variation>E</variation>
    <location>
        <position position="71"/>
    </location>
</feature>
<feature type="mutagenesis site" description="No effect on EPO/LIF-induced signaling suppression. Partial suppression of JAK2 phosphorylation. No effect on binding to JH1. Loss of binding to IL12RB2." evidence="6 8">
    <original>R</original>
    <variation>K</variation>
    <location>
        <position position="71"/>
    </location>
</feature>
<feature type="mutagenesis site" description="Impaired binding to Y429/Y431 phosphorylated EPOR." evidence="7">
    <original>L</original>
    <variation>A</variation>
    <location>
        <position position="93"/>
    </location>
</feature>
<feature type="mutagenesis site" description="Greatly impaired binding to Y429/Y431 phosphorylated EPOR." evidence="7">
    <original>R</original>
    <variation>E</variation>
    <location>
        <position position="94"/>
    </location>
</feature>
<feature type="sequence conflict" description="In Ref. 1; BAA22430." evidence="15" ref="1">
    <original>T</original>
    <variation>A</variation>
    <location>
        <position position="81"/>
    </location>
</feature>
<evidence type="ECO:0000250" key="1"/>
<evidence type="ECO:0000250" key="2">
    <source>
        <dbReference type="UniProtKB" id="O35718"/>
    </source>
</evidence>
<evidence type="ECO:0000255" key="3">
    <source>
        <dbReference type="PROSITE-ProRule" id="PRU00191"/>
    </source>
</evidence>
<evidence type="ECO:0000255" key="4">
    <source>
        <dbReference type="PROSITE-ProRule" id="PRU00194"/>
    </source>
</evidence>
<evidence type="ECO:0000256" key="5">
    <source>
        <dbReference type="SAM" id="MobiDB-lite"/>
    </source>
</evidence>
<evidence type="ECO:0000269" key="6">
    <source>
    </source>
</evidence>
<evidence type="ECO:0000269" key="7">
    <source>
    </source>
</evidence>
<evidence type="ECO:0000269" key="8">
    <source>
    </source>
</evidence>
<evidence type="ECO:0000269" key="9">
    <source>
    </source>
</evidence>
<evidence type="ECO:0000269" key="10">
    <source>
    </source>
</evidence>
<evidence type="ECO:0000269" key="11">
    <source>
    </source>
</evidence>
<evidence type="ECO:0000269" key="12">
    <source>
    </source>
</evidence>
<evidence type="ECO:0000269" key="13">
    <source>
    </source>
</evidence>
<evidence type="ECO:0000269" key="14">
    <source>
    </source>
</evidence>
<evidence type="ECO:0000305" key="15"/>
<evidence type="ECO:0000312" key="16">
    <source>
        <dbReference type="HGNC" id="HGNC:19391"/>
    </source>
</evidence>
<comment type="function">
    <text evidence="2 10">SOCS family proteins form part of a classical negative feedback system that regulates cytokine signal transduction. SOCS3 is involved in negative regulation of cytokines that signal through the JAK/STAT pathway. Inhibits cytokine signal transduction by binding to tyrosine kinase receptors including IL6ST/gp130, LIF, erythropoietin, insulin, IL12, GCSF and leptin receptors. Binding to JAK2 inhibits its kinase activity and regulates IL6 signaling. Suppresses fetal liver erythropoiesis. Regulates onset and maintenance of allergic responses mediated by T-helper type 2 cells (By similarity). Probable substrate recognition component of a SCF-like ECS (Elongin BC-CUL2/5-SOCS-box protein) E3 ubiquitin-protein ligase complex which mediates the ubiquitination and subsequent proteasomal degradation of target proteins (PubMed:15601820).</text>
</comment>
<comment type="pathway">
    <text>Protein modification; protein ubiquitination.</text>
</comment>
<comment type="subunit">
    <text evidence="2 6 7 8 9 10 11 13">Interacts with multiple activated proteins of the tyrosine kinase signaling pathway including IGF1 receptor, insulin receptor and JAK2. Binding to JAK2 is mediated through the KIR and SH2 domains to a phosphorylated tyrosine residue within the JAK2 JH1 domain (PubMed:10421843). Binds specific activated tyrosine residues of the leptin, EPO, IL12, GSCF and gp130 receptors (PubMed:12027890, PubMed:14559241). Interaction with CSNK1E stabilizes SOCS3 protein (PubMed:15070676). Component of the probable ECS(SOCS3) E3 ubiquitin-protein ligase complex which contains CUL5, RNF7/RBX2, Elongin BC complex and SOCS3 (PubMed:15601820). Interacts with CUL5, RNF7, ELOB and ELOC (PubMed:15601820). Interacts with CUL2 (PubMed:15601820). Interacts with FGFR3 (PubMed:16410555). Interacts with INSR (By similarity). Interacts with BCL10; this interaction may interfere with BCL10-binding with PELI2 (By similarity). Interacts with NOD2 (via CARD domain); the interaction promotes NOD2 degradation (PubMed:23019338).</text>
</comment>
<comment type="interaction">
    <interactant intactId="EBI-714146">
        <id>O14543</id>
    </interactant>
    <interactant intactId="EBI-2105445">
        <id>P51451</id>
        <label>BLK</label>
    </interactant>
    <organismsDiffer>false</organismsDiffer>
    <experiments>3</experiments>
</comment>
<comment type="interaction">
    <interactant intactId="EBI-714146">
        <id>O14543</id>
    </interactant>
    <interactant intactId="EBI-517684">
        <id>Q13480</id>
        <label>GAB1</label>
    </interactant>
    <organismsDiffer>false</organismsDiffer>
    <experiments>4</experiments>
</comment>
<comment type="interaction">
    <interactant intactId="EBI-714146">
        <id>O14543</id>
    </interactant>
    <interactant intactId="EBI-10181113">
        <id>Q8N8K9</id>
        <label>KIAA1958</label>
    </interactant>
    <organismsDiffer>false</organismsDiffer>
    <experiments>6</experiments>
</comment>
<comment type="interaction">
    <interactant intactId="EBI-714146">
        <id>O14543</id>
    </interactant>
    <interactant intactId="EBI-1379503">
        <id>P10721</id>
        <label>KIT</label>
    </interactant>
    <organismsDiffer>false</organismsDiffer>
    <experiments>3</experiments>
</comment>
<comment type="interaction">
    <interactant intactId="EBI-714146">
        <id>O14543</id>
    </interactant>
    <interactant intactId="EBI-2133734">
        <id>Q66K74</id>
        <label>MAP1S</label>
    </interactant>
    <organismsDiffer>false</organismsDiffer>
    <experiments>6</experiments>
</comment>
<comment type="interaction">
    <interactant intactId="EBI-714146">
        <id>O14543</id>
    </interactant>
    <interactant intactId="EBI-10181089">
        <id>I6L996</id>
        <label>PTK2</label>
    </interactant>
    <organismsDiffer>false</organismsDiffer>
    <experiments>3</experiments>
</comment>
<comment type="interaction">
    <interactant intactId="EBI-714146">
        <id>O14543</id>
    </interactant>
    <interactant intactId="EBI-1045459">
        <id>O95863</id>
        <label>SNAI1</label>
    </interactant>
    <organismsDiffer>false</organismsDiffer>
    <experiments>3</experiments>
</comment>
<comment type="interaction">
    <interactant intactId="EBI-714146">
        <id>O14543</id>
    </interactant>
    <interactant intactId="EBI-7877438">
        <id>P42681</id>
        <label>TXK</label>
    </interactant>
    <organismsDiffer>false</organismsDiffer>
    <experiments>3</experiments>
</comment>
<comment type="interaction">
    <interactant intactId="EBI-714146">
        <id>O14543</id>
    </interactant>
    <interactant intactId="EBI-515331">
        <id>P07947</id>
        <label>YES1</label>
    </interactant>
    <organismsDiffer>false</organismsDiffer>
    <experiments>6</experiments>
</comment>
<comment type="tissue specificity">
    <text>Widely expressed with high expression in heart, placenta, skeletal muscle, peripheral blood leukocytes, fetal and adult lung, and fetal liver and kidney. Lower levels in thymus.</text>
</comment>
<comment type="domain">
    <text>The ESS and SH2 domains are required for JAK phosphotyrosine binding. Further interaction with the KIR domain is necessary for signal and kinase inhibition.</text>
</comment>
<comment type="domain">
    <text evidence="1">The SOCS box domain mediates the interaction with the Elongin BC complex, an adapter module in different E3 ubiquitin ligase complexes.</text>
</comment>
<comment type="PTM">
    <text>Phosphorylated on tyrosine residues after stimulation by the cytokines, IL-2, EPO or IGF1.</text>
</comment>
<comment type="disease">
    <text evidence="12">There is some evidence that SOCS3 may be a susceptibility gene for atopic dermatitis linked to 17q25. SOCS3 messenger RNA is significantly more highly expressed in skin from patients with atopic dermatitis than in skin from healthy controls. Furthermore, a genetic association between atopic dermatitis and a haplotype in the SOCS3 gene has been found in two independent groups of patients.</text>
</comment>
<comment type="online information" name="Atlas of Genetics and Cytogenetics in Oncology and Haematology">
    <link uri="https://atlasgeneticsoncology.org/gene/44124/SOCS3"/>
</comment>
<sequence>MVTHSKFPAAGMSRPLDTSLRLKTFSSKSEYQLVVNAVRKLQESGFYWSAVTGGEANLLLSAEPAGTFLIRDSSDQRHFFTLSVKTQSGTKNLRIQCEGGSFSLQSDPRSTQPVPRFDCVLKLVHHYMPPPGAPSFPSPPTEPSSEVPEQPSAQPLPGSPPRRAYYIYSGGEKIPLVLSRPLSSNVATLQHLCRKTVNGHLDSYEKVTQLPGPIREFLDQYDAPL</sequence>
<name>SOCS3_HUMAN</name>
<accession>O14543</accession>
<accession>O14509</accession>
<proteinExistence type="evidence at protein level"/>
<organism>
    <name type="scientific">Homo sapiens</name>
    <name type="common">Human</name>
    <dbReference type="NCBI Taxonomy" id="9606"/>
    <lineage>
        <taxon>Eukaryota</taxon>
        <taxon>Metazoa</taxon>
        <taxon>Chordata</taxon>
        <taxon>Craniata</taxon>
        <taxon>Vertebrata</taxon>
        <taxon>Euteleostomi</taxon>
        <taxon>Mammalia</taxon>
        <taxon>Eutheria</taxon>
        <taxon>Euarchontoglires</taxon>
        <taxon>Primates</taxon>
        <taxon>Haplorrhini</taxon>
        <taxon>Catarrhini</taxon>
        <taxon>Hominidae</taxon>
        <taxon>Homo</taxon>
    </lineage>
</organism>
<dbReference type="EMBL" id="AB004904">
    <property type="protein sequence ID" value="BAA22430.1"/>
    <property type="molecule type" value="mRNA"/>
</dbReference>
<dbReference type="EMBL" id="AB006967">
    <property type="protein sequence ID" value="BAA22537.1"/>
    <property type="molecule type" value="mRNA"/>
</dbReference>
<dbReference type="EMBL" id="AF159854">
    <property type="protein sequence ID" value="AAD42231.1"/>
    <property type="molecule type" value="mRNA"/>
</dbReference>
<dbReference type="EMBL" id="BC060858">
    <property type="protein sequence ID" value="AAH60858.1"/>
    <property type="molecule type" value="mRNA"/>
</dbReference>
<dbReference type="CCDS" id="CCDS11756.1"/>
<dbReference type="PIR" id="JC5627">
    <property type="entry name" value="JC5627"/>
</dbReference>
<dbReference type="PIR" id="JC5761">
    <property type="entry name" value="JC5761"/>
</dbReference>
<dbReference type="RefSeq" id="NP_001365861.1">
    <property type="nucleotide sequence ID" value="NM_001378932.1"/>
</dbReference>
<dbReference type="RefSeq" id="NP_001365862.1">
    <property type="nucleotide sequence ID" value="NM_001378933.1"/>
</dbReference>
<dbReference type="RefSeq" id="NP_003946.3">
    <property type="nucleotide sequence ID" value="NM_003955.4"/>
</dbReference>
<dbReference type="BMRB" id="O14543"/>
<dbReference type="SMR" id="O14543"/>
<dbReference type="BioGRID" id="114488">
    <property type="interactions" value="100"/>
</dbReference>
<dbReference type="CORUM" id="O14543"/>
<dbReference type="FunCoup" id="O14543">
    <property type="interactions" value="1279"/>
</dbReference>
<dbReference type="IntAct" id="O14543">
    <property type="interactions" value="60"/>
</dbReference>
<dbReference type="MINT" id="O14543"/>
<dbReference type="STRING" id="9606.ENSP00000330341"/>
<dbReference type="GlyGen" id="O14543">
    <property type="glycosylation" value="1 site, 1 O-linked glycan (1 site)"/>
</dbReference>
<dbReference type="iPTMnet" id="O14543"/>
<dbReference type="PhosphoSitePlus" id="O14543"/>
<dbReference type="BioMuta" id="SOCS3"/>
<dbReference type="MassIVE" id="O14543"/>
<dbReference type="PaxDb" id="9606-ENSP00000330341"/>
<dbReference type="PeptideAtlas" id="O14543"/>
<dbReference type="Antibodypedia" id="3206">
    <property type="antibodies" value="830 antibodies from 43 providers"/>
</dbReference>
<dbReference type="DNASU" id="9021"/>
<dbReference type="Ensembl" id="ENST00000330871.3">
    <property type="protein sequence ID" value="ENSP00000330341.2"/>
    <property type="gene ID" value="ENSG00000184557.4"/>
</dbReference>
<dbReference type="GeneID" id="9021"/>
<dbReference type="KEGG" id="hsa:9021"/>
<dbReference type="MANE-Select" id="ENST00000330871.3">
    <property type="protein sequence ID" value="ENSP00000330341.2"/>
    <property type="RefSeq nucleotide sequence ID" value="NM_003955.5"/>
    <property type="RefSeq protein sequence ID" value="NP_003946.3"/>
</dbReference>
<dbReference type="AGR" id="HGNC:19391"/>
<dbReference type="CTD" id="9021"/>
<dbReference type="DisGeNET" id="9021"/>
<dbReference type="GeneCards" id="SOCS3"/>
<dbReference type="HGNC" id="HGNC:19391">
    <property type="gene designation" value="SOCS3"/>
</dbReference>
<dbReference type="HPA" id="ENSG00000184557">
    <property type="expression patterns" value="Tissue enhanced (adipose)"/>
</dbReference>
<dbReference type="MalaCards" id="SOCS3"/>
<dbReference type="MIM" id="604176">
    <property type="type" value="gene"/>
</dbReference>
<dbReference type="neXtProt" id="NX_O14543"/>
<dbReference type="OpenTargets" id="ENSG00000184557"/>
<dbReference type="PharmGKB" id="PA134885765"/>
<dbReference type="VEuPathDB" id="HostDB:ENSG00000184557"/>
<dbReference type="eggNOG" id="KOG4566">
    <property type="taxonomic scope" value="Eukaryota"/>
</dbReference>
<dbReference type="GeneTree" id="ENSGT00940000159620"/>
<dbReference type="HOGENOM" id="CLU_079452_3_0_1"/>
<dbReference type="InParanoid" id="O14543"/>
<dbReference type="OMA" id="KLVHYYM"/>
<dbReference type="OrthoDB" id="6426624at2759"/>
<dbReference type="PAN-GO" id="O14543">
    <property type="GO annotations" value="3 GO annotations based on evolutionary models"/>
</dbReference>
<dbReference type="PhylomeDB" id="O14543"/>
<dbReference type="TreeFam" id="TF321368"/>
<dbReference type="PathwayCommons" id="O14543"/>
<dbReference type="Reactome" id="R-HSA-1059683">
    <property type="pathway name" value="Interleukin-6 signaling"/>
</dbReference>
<dbReference type="Reactome" id="R-HSA-2586552">
    <property type="pathway name" value="Signaling by Leptin"/>
</dbReference>
<dbReference type="Reactome" id="R-HSA-6785807">
    <property type="pathway name" value="Interleukin-4 and Interleukin-13 signaling"/>
</dbReference>
<dbReference type="Reactome" id="R-HSA-877300">
    <property type="pathway name" value="Interferon gamma signaling"/>
</dbReference>
<dbReference type="Reactome" id="R-HSA-877312">
    <property type="pathway name" value="Regulation of IFNG signaling"/>
</dbReference>
<dbReference type="Reactome" id="R-HSA-8849474">
    <property type="pathway name" value="PTK6 Activates STAT3"/>
</dbReference>
<dbReference type="Reactome" id="R-HSA-8939242">
    <property type="pathway name" value="RUNX1 regulates transcription of genes involved in differentiation of keratinocytes"/>
</dbReference>
<dbReference type="Reactome" id="R-HSA-8951664">
    <property type="pathway name" value="Neddylation"/>
</dbReference>
<dbReference type="Reactome" id="R-HSA-909733">
    <property type="pathway name" value="Interferon alpha/beta signaling"/>
</dbReference>
<dbReference type="Reactome" id="R-HSA-912694">
    <property type="pathway name" value="Regulation of IFNA/IFNB signaling"/>
</dbReference>
<dbReference type="Reactome" id="R-HSA-9674555">
    <property type="pathway name" value="Signaling by CSF3 (G-CSF)"/>
</dbReference>
<dbReference type="Reactome" id="R-HSA-9705462">
    <property type="pathway name" value="Inactivation of CSF3 (G-CSF) signaling"/>
</dbReference>
<dbReference type="Reactome" id="R-HSA-982772">
    <property type="pathway name" value="Growth hormone receptor signaling"/>
</dbReference>
<dbReference type="Reactome" id="R-HSA-983168">
    <property type="pathway name" value="Antigen processing: Ubiquitination &amp; Proteasome degradation"/>
</dbReference>
<dbReference type="SignaLink" id="O14543"/>
<dbReference type="SIGNOR" id="O14543"/>
<dbReference type="UniPathway" id="UPA00143"/>
<dbReference type="BioGRID-ORCS" id="9021">
    <property type="hits" value="129 hits in 1202 CRISPR screens"/>
</dbReference>
<dbReference type="ChiTaRS" id="SOCS3">
    <property type="organism name" value="human"/>
</dbReference>
<dbReference type="GeneWiki" id="SOCS3"/>
<dbReference type="GenomeRNAi" id="9021"/>
<dbReference type="Pharos" id="O14543">
    <property type="development level" value="Tbio"/>
</dbReference>
<dbReference type="PRO" id="PR:O14543"/>
<dbReference type="Proteomes" id="UP000005640">
    <property type="component" value="Chromosome 17"/>
</dbReference>
<dbReference type="RNAct" id="O14543">
    <property type="molecule type" value="protein"/>
</dbReference>
<dbReference type="Bgee" id="ENSG00000184557">
    <property type="expression patterns" value="Expressed in mucosa of stomach and 184 other cell types or tissues"/>
</dbReference>
<dbReference type="ExpressionAtlas" id="O14543">
    <property type="expression patterns" value="baseline and differential"/>
</dbReference>
<dbReference type="GO" id="GO:0009898">
    <property type="term" value="C:cytoplasmic side of plasma membrane"/>
    <property type="evidence" value="ECO:0000314"/>
    <property type="project" value="UniProt"/>
</dbReference>
<dbReference type="GO" id="GO:0005829">
    <property type="term" value="C:cytosol"/>
    <property type="evidence" value="ECO:0000304"/>
    <property type="project" value="Reactome"/>
</dbReference>
<dbReference type="GO" id="GO:0005126">
    <property type="term" value="F:cytokine receptor binding"/>
    <property type="evidence" value="ECO:0000318"/>
    <property type="project" value="GO_Central"/>
</dbReference>
<dbReference type="GO" id="GO:0035198">
    <property type="term" value="F:miRNA binding"/>
    <property type="evidence" value="ECO:0007669"/>
    <property type="project" value="Ensembl"/>
</dbReference>
<dbReference type="GO" id="GO:0001784">
    <property type="term" value="F:phosphotyrosine residue binding"/>
    <property type="evidence" value="ECO:0007669"/>
    <property type="project" value="Ensembl"/>
</dbReference>
<dbReference type="GO" id="GO:0004860">
    <property type="term" value="F:protein kinase inhibitor activity"/>
    <property type="evidence" value="ECO:0000304"/>
    <property type="project" value="ProtInc"/>
</dbReference>
<dbReference type="GO" id="GO:0030292">
    <property type="term" value="F:protein tyrosine kinase inhibitor activity"/>
    <property type="evidence" value="ECO:0000314"/>
    <property type="project" value="UniProt"/>
</dbReference>
<dbReference type="GO" id="GO:0060670">
    <property type="term" value="P:branching involved in labyrinthine layer morphogenesis"/>
    <property type="evidence" value="ECO:0007669"/>
    <property type="project" value="Ensembl"/>
</dbReference>
<dbReference type="GO" id="GO:0097398">
    <property type="term" value="P:cellular response to interleukin-17"/>
    <property type="evidence" value="ECO:0007669"/>
    <property type="project" value="Ensembl"/>
</dbReference>
<dbReference type="GO" id="GO:1990830">
    <property type="term" value="P:cellular response to leukemia inhibitory factor"/>
    <property type="evidence" value="ECO:0007669"/>
    <property type="project" value="Ensembl"/>
</dbReference>
<dbReference type="GO" id="GO:0019221">
    <property type="term" value="P:cytokine-mediated signaling pathway"/>
    <property type="evidence" value="ECO:0000318"/>
    <property type="project" value="GO_Central"/>
</dbReference>
<dbReference type="GO" id="GO:0035556">
    <property type="term" value="P:intracellular signal transduction"/>
    <property type="evidence" value="ECO:0007669"/>
    <property type="project" value="InterPro"/>
</dbReference>
<dbReference type="GO" id="GO:0043066">
    <property type="term" value="P:negative regulation of apoptotic process"/>
    <property type="evidence" value="ECO:0000304"/>
    <property type="project" value="ProtInc"/>
</dbReference>
<dbReference type="GO" id="GO:0050728">
    <property type="term" value="P:negative regulation of inflammatory response"/>
    <property type="evidence" value="ECO:0007669"/>
    <property type="project" value="Ensembl"/>
</dbReference>
<dbReference type="GO" id="GO:0046627">
    <property type="term" value="P:negative regulation of insulin receptor signaling pathway"/>
    <property type="evidence" value="ECO:0007669"/>
    <property type="project" value="Ensembl"/>
</dbReference>
<dbReference type="GO" id="GO:0046426">
    <property type="term" value="P:negative regulation of receptor signaling pathway via JAK-STAT"/>
    <property type="evidence" value="ECO:0000315"/>
    <property type="project" value="BHF-UCL"/>
</dbReference>
<dbReference type="GO" id="GO:0060674">
    <property type="term" value="P:placenta blood vessel development"/>
    <property type="evidence" value="ECO:0007669"/>
    <property type="project" value="Ensembl"/>
</dbReference>
<dbReference type="GO" id="GO:0045597">
    <property type="term" value="P:positive regulation of cell differentiation"/>
    <property type="evidence" value="ECO:0007669"/>
    <property type="project" value="Ensembl"/>
</dbReference>
<dbReference type="GO" id="GO:0016567">
    <property type="term" value="P:protein ubiquitination"/>
    <property type="evidence" value="ECO:0007669"/>
    <property type="project" value="UniProtKB-UniPathway"/>
</dbReference>
<dbReference type="GO" id="GO:0072540">
    <property type="term" value="P:T-helper 17 cell lineage commitment"/>
    <property type="evidence" value="ECO:0000304"/>
    <property type="project" value="UniProt"/>
</dbReference>
<dbReference type="CDD" id="cd10384">
    <property type="entry name" value="SH2_SOCS3"/>
    <property type="match status" value="1"/>
</dbReference>
<dbReference type="CDD" id="cd03737">
    <property type="entry name" value="SOCS_SOCS3"/>
    <property type="match status" value="1"/>
</dbReference>
<dbReference type="FunFam" id="3.30.505.10:FF:000066">
    <property type="entry name" value="suppressor of cytokine signaling 3"/>
    <property type="match status" value="1"/>
</dbReference>
<dbReference type="Gene3D" id="3.30.505.10">
    <property type="entry name" value="SH2 domain"/>
    <property type="match status" value="1"/>
</dbReference>
<dbReference type="Gene3D" id="1.10.750.20">
    <property type="entry name" value="SOCS box"/>
    <property type="match status" value="1"/>
</dbReference>
<dbReference type="InterPro" id="IPR000980">
    <property type="entry name" value="SH2"/>
</dbReference>
<dbReference type="InterPro" id="IPR036860">
    <property type="entry name" value="SH2_dom_sf"/>
</dbReference>
<dbReference type="InterPro" id="IPR035863">
    <property type="entry name" value="SOCS3_SH2"/>
</dbReference>
<dbReference type="InterPro" id="IPR028414">
    <property type="entry name" value="SOCS3_SOCS_box"/>
</dbReference>
<dbReference type="InterPro" id="IPR001496">
    <property type="entry name" value="SOCS_box"/>
</dbReference>
<dbReference type="InterPro" id="IPR036036">
    <property type="entry name" value="SOCS_box-like_dom_sf"/>
</dbReference>
<dbReference type="PANTHER" id="PTHR10155">
    <property type="entry name" value="PHOSPHATIDYLINOSITOL 3-KINASE REGULATORY SUBUNIT"/>
    <property type="match status" value="1"/>
</dbReference>
<dbReference type="PANTHER" id="PTHR10155:SF11">
    <property type="entry name" value="SUPPRESSOR OF CYTOKINE SIGNALING 3"/>
    <property type="match status" value="1"/>
</dbReference>
<dbReference type="Pfam" id="PF00017">
    <property type="entry name" value="SH2"/>
    <property type="match status" value="1"/>
</dbReference>
<dbReference type="SMART" id="SM00252">
    <property type="entry name" value="SH2"/>
    <property type="match status" value="1"/>
</dbReference>
<dbReference type="SMART" id="SM00253">
    <property type="entry name" value="SOCS"/>
    <property type="match status" value="1"/>
</dbReference>
<dbReference type="SMART" id="SM00969">
    <property type="entry name" value="SOCS_box"/>
    <property type="match status" value="1"/>
</dbReference>
<dbReference type="SUPFAM" id="SSF55550">
    <property type="entry name" value="SH2 domain"/>
    <property type="match status" value="1"/>
</dbReference>
<dbReference type="SUPFAM" id="SSF158235">
    <property type="entry name" value="SOCS box-like"/>
    <property type="match status" value="1"/>
</dbReference>
<dbReference type="PROSITE" id="PS50001">
    <property type="entry name" value="SH2"/>
    <property type="match status" value="1"/>
</dbReference>
<dbReference type="PROSITE" id="PS50225">
    <property type="entry name" value="SOCS"/>
    <property type="match status" value="1"/>
</dbReference>
<reference key="1">
    <citation type="journal article" date="1997" name="Biochem. Biophys. Res. Commun.">
        <title>Cloning and functional analysis of new members of STAT induced STAT inhibitor (SSI) family: SSI-2 and SSI-3.</title>
        <authorList>
            <person name="Minamoto S."/>
            <person name="Ikegame K."/>
            <person name="Ueno K."/>
            <person name="Narazaki M."/>
            <person name="Naka T."/>
            <person name="Yamamoto H."/>
            <person name="Matsumoto T."/>
            <person name="Saito H."/>
            <person name="Hosoe S."/>
            <person name="Kishimoto T."/>
        </authorList>
    </citation>
    <scope>NUCLEOTIDE SEQUENCE [MRNA]</scope>
    <scope>VARIANT TYR-125</scope>
    <source>
        <tissue>T-cell lymphoma</tissue>
    </source>
</reference>
<reference key="2">
    <citation type="journal article" date="1997" name="Biochem. Biophys. Res. Commun.">
        <title>Cloning and characterization of novel CIS family genes.</title>
        <authorList>
            <person name="Masuhara M."/>
            <person name="Sakamoto H."/>
            <person name="Matsumoto A."/>
            <person name="Suzuki R."/>
            <person name="Yasukawa H."/>
            <person name="Mitsui K."/>
            <person name="Wakioka T."/>
            <person name="Tanimura S."/>
            <person name="Sasaki A."/>
            <person name="Misawa H."/>
            <person name="Yokouchi M."/>
            <person name="Ohtsubo M."/>
            <person name="Yoshimura A."/>
        </authorList>
    </citation>
    <scope>NUCLEOTIDE SEQUENCE [MRNA]</scope>
</reference>
<reference key="3">
    <citation type="journal article" date="2000" name="Biochem. Biophys. Res. Commun.">
        <title>Suppressor of cytokine signaling (SOCS)-3 protein interacts with the insulin-like growth factor-I receptor.</title>
        <authorList>
            <person name="Dey B.R."/>
            <person name="Furlanetto R.W."/>
            <person name="Nissley P."/>
        </authorList>
    </citation>
    <scope>NUCLEOTIDE SEQUENCE [MRNA]</scope>
    <source>
        <tissue>Skeletal muscle</tissue>
    </source>
</reference>
<reference key="4">
    <citation type="journal article" date="2004" name="Genome Res.">
        <title>The status, quality, and expansion of the NIH full-length cDNA project: the Mammalian Gene Collection (MGC).</title>
        <authorList>
            <consortium name="The MGC Project Team"/>
        </authorList>
    </citation>
    <scope>NUCLEOTIDE SEQUENCE [LARGE SCALE MRNA]</scope>
    <source>
        <tissue>Placenta</tissue>
    </source>
</reference>
<reference key="5">
    <citation type="journal article" date="1999" name="Genes Cells">
        <title>Cytokine-inducible SH2 protein-3 (CIS3/SOCS3) inhibits Janus tyrosine kinase by binding through the N-terminal kinase inhibitory region as well as SH2 domain.</title>
        <authorList>
            <person name="Sasaki A."/>
            <person name="Yasukawa H."/>
            <person name="Suzuki A."/>
            <person name="Kamizono S."/>
            <person name="Syoda T."/>
            <person name="Kinjyo I."/>
            <person name="Sasaki M."/>
            <person name="Johnston J.A."/>
            <person name="Yoshimura A."/>
        </authorList>
    </citation>
    <scope>INTERACTION WITH JAK2</scope>
    <scope>MUTAGENESIS OF LEU-22; PHE-25; GLU-30; TYR-31; VAL-34; LEU-41; GLY-45 AND ARG-71</scope>
</reference>
<reference key="6">
    <citation type="journal article" date="2002" name="Eur. J. Biochem.">
        <title>A new high affinity binding site for suppressor of cytokine signaling-3 on the erythropoietin receptor.</title>
        <authorList>
            <person name="Hoertner M."/>
            <person name="Nielsch U."/>
            <person name="Mayr L.M."/>
            <person name="Heinrich P.C."/>
            <person name="Haan S."/>
        </authorList>
    </citation>
    <scope>INTERACTION WITH EPOR</scope>
    <scope>MUTAGENESIS OF GLY-53; LEU-58; LEU-93 AND ARG-94</scope>
</reference>
<reference key="7">
    <citation type="journal article" date="2003" name="Biochem. Biophys. Res. Commun.">
        <title>SOCS-3 inhibits IL-12-induced STAT4 activation by binding through its SH2 domain to the STAT4 docking site in the IL-12 receptor beta2 subunit.</title>
        <authorList>
            <person name="Yamamoto K."/>
            <person name="Yamaguchi M."/>
            <person name="Miyasaka N."/>
            <person name="Miura O."/>
        </authorList>
    </citation>
    <scope>INTERACTION WITH IL12RB2</scope>
    <scope>MUTAGENESIS OF ARG-71</scope>
</reference>
<reference key="8">
    <citation type="journal article" date="2004" name="Blood">
        <title>Involvement of casein kinase Iepsilon in cytokine-induced granulocytic differentiation.</title>
        <authorList>
            <person name="Okamura A."/>
            <person name="Iwata N."/>
            <person name="Nagata A."/>
            <person name="Tamekane A."/>
            <person name="Shimoyama M."/>
            <person name="Gomyo H."/>
            <person name="Yakushijin K."/>
            <person name="Urahama N."/>
            <person name="Hamaguchi M."/>
            <person name="Fukui C."/>
            <person name="Chihara K."/>
            <person name="Ito M."/>
            <person name="Matsui T."/>
        </authorList>
    </citation>
    <scope>INTERACTION WITH CSNK1E</scope>
    <scope>PROTEIN STABILIZATION</scope>
</reference>
<reference key="9">
    <citation type="journal article" date="2004" name="Genes Dev.">
        <title>VHL-box and SOCS-box domains determine binding specificity for Cul2-Rbx1 and Cul5-Rbx2 modules of ubiquitin ligases.</title>
        <authorList>
            <person name="Kamura T."/>
            <person name="Maenaka K."/>
            <person name="Kotoshiba S."/>
            <person name="Matsumoto M."/>
            <person name="Kohda D."/>
            <person name="Conaway R.C."/>
            <person name="Conaway J.W."/>
            <person name="Nakayama K.I."/>
        </authorList>
    </citation>
    <scope>FUNCTION IN AN E3 UBIQUITIN-PROTEIN LIGASE COMPLEX</scope>
    <scope>INTERACTION WITH CUL5; RNF7; ELOB AND ELOC</scope>
</reference>
<reference key="10">
    <citation type="journal article" date="2006" name="Am. J. Hum. Genet.">
        <title>Elevated expression and genetic association links the SOCS3 gene to atopic dermatitis.</title>
        <authorList>
            <person name="Ekelund E."/>
            <person name="Saeaef A."/>
            <person name="Tengvall-Linder M."/>
            <person name="Melen E."/>
            <person name="Link J."/>
            <person name="Barker J."/>
            <person name="Reynolds N.J."/>
            <person name="Meggitt S.J."/>
            <person name="Kere J."/>
            <person name="Wahlgren C.-F."/>
            <person name="Pershagen G."/>
            <person name="Wickman M."/>
            <person name="Nordenskjoeld M."/>
            <person name="Kockum I."/>
            <person name="Bradley M."/>
        </authorList>
    </citation>
    <scope>POSSIBLE INVOLVEMENT IN ATOPIC DERMATITIS</scope>
</reference>
<reference key="11">
    <citation type="journal article" date="2006" name="J. Cell Sci.">
        <title>Suppressors of cytokine signaling (SOCS) 1 and SOCS3 interact with and modulate fibroblast growth factor receptor signaling.</title>
        <authorList>
            <person name="Ben-Zvi T."/>
            <person name="Yayon A."/>
            <person name="Gertler A."/>
            <person name="Monsonego-Ornan E."/>
        </authorList>
    </citation>
    <scope>INTERACTION WITH FGFR3</scope>
</reference>
<reference key="12">
    <citation type="journal article" date="2012" name="J. Biol. Chem.">
        <title>Proteasomal degradation of Nod2 protein mediates tolerance to bacterial cell wall components.</title>
        <authorList>
            <person name="Lee K.H."/>
            <person name="Biswas A."/>
            <person name="Liu Y.J."/>
            <person name="Kobayashi K.S."/>
        </authorList>
    </citation>
    <scope>INTERACTION WITH NOD2</scope>
</reference>
<gene>
    <name evidence="16" type="primary">SOCS3</name>
    <name type="synonym">CIS3</name>
    <name type="synonym">SSI3</name>
</gene>
<keyword id="KW-0341">Growth regulation</keyword>
<keyword id="KW-0582">Pharmaceutical</keyword>
<keyword id="KW-0597">Phosphoprotein</keyword>
<keyword id="KW-1267">Proteomics identification</keyword>
<keyword id="KW-1185">Reference proteome</keyword>
<keyword id="KW-0727">SH2 domain</keyword>
<keyword id="KW-0734">Signal transduction inhibitor</keyword>
<keyword id="KW-0833">Ubl conjugation pathway</keyword>